<sequence>MSRPSSIYRPGNSSLTSRRIHHVIPQDSFPLLDFKEISICLQSCDFIANEELVSRPTSQYIKTLLEQLLDSFMGLSADNINGMVRNVNKNDLSMTKTQDAQMEEEPENGGSQIEDDDDITSSVRLILLHRGAYEFFSICGVNDFTLMDIMRPEPQRIRRILSAVVNYARFREENSVECEKLVSISEGNLEQLKVVQNENSRLSNKINDLKYKIEANETDEGNKKATLKQITTYNSKLENELKKLKKNQEILTLEHSKYKDEKRRLIEKLEDHNYLIMESNKELDKLKSYLLSNPEILTKIIEDLKTNLSEYQTNLADLESKNKNMTISIESFQLVEQELKNLFRILEEVLNDLTKEETSLDKLNKYQEFKEQQNLTLNDLNRQIQQVTRQLNNTEEKIKRLRHQSSERSEASKQKLISLKDGYDTLVKERKVKEQELNKKKDFISELETKMNGERSNFQIELRNAELAVAKLNSHVKLYLTEMNKKVD</sequence>
<feature type="chain" id="PRO_0000246650" description="Probable kinetochore protein NUF2">
    <location>
        <begin position="1"/>
        <end position="488"/>
    </location>
</feature>
<feature type="region of interest" description="Disordered" evidence="3">
    <location>
        <begin position="96"/>
        <end position="115"/>
    </location>
</feature>
<feature type="coiled-coil region" evidence="2">
    <location>
        <begin position="186"/>
        <end position="479"/>
    </location>
</feature>
<feature type="compositionally biased region" description="Acidic residues" evidence="3">
    <location>
        <begin position="101"/>
        <end position="115"/>
    </location>
</feature>
<comment type="function">
    <text evidence="1">Acts as a component of the essential kinetochore-associated NDC80 complex, which is required for chromosome segregation and spindle checkpoint activity.</text>
</comment>
<comment type="subunit">
    <text evidence="1">Component of the NDC80 complex, which consists of NDC80, NUF2, SPC24 and SPC25.</text>
</comment>
<comment type="subcellular location">
    <subcellularLocation>
        <location evidence="1">Nucleus</location>
    </subcellularLocation>
    <subcellularLocation>
        <location evidence="1">Chromosome</location>
        <location evidence="1">Centromere</location>
        <location evidence="1">Kinetochore</location>
    </subcellularLocation>
    <text evidence="1">Associated with kinetochores.</text>
</comment>
<comment type="similarity">
    <text evidence="4">Belongs to the NUF2 family.</text>
</comment>
<accession>Q6BPA9</accession>
<dbReference type="EMBL" id="CR382137">
    <property type="protein sequence ID" value="CAG88207.2"/>
    <property type="molecule type" value="Genomic_DNA"/>
</dbReference>
<dbReference type="RefSeq" id="XP_459961.2">
    <property type="nucleotide sequence ID" value="XM_459961.1"/>
</dbReference>
<dbReference type="SMR" id="Q6BPA9"/>
<dbReference type="FunCoup" id="Q6BPA9">
    <property type="interactions" value="331"/>
</dbReference>
<dbReference type="STRING" id="284592.Q6BPA9"/>
<dbReference type="GeneID" id="2902630"/>
<dbReference type="KEGG" id="dha:DEHA2E15092g"/>
<dbReference type="eggNOG" id="KOG4438">
    <property type="taxonomic scope" value="Eukaryota"/>
</dbReference>
<dbReference type="HOGENOM" id="CLU_025461_2_0_1"/>
<dbReference type="InParanoid" id="Q6BPA9"/>
<dbReference type="OMA" id="YLKMEAH"/>
<dbReference type="OrthoDB" id="8194677at2759"/>
<dbReference type="Proteomes" id="UP000000599">
    <property type="component" value="Chromosome E"/>
</dbReference>
<dbReference type="GO" id="GO:0031262">
    <property type="term" value="C:Ndc80 complex"/>
    <property type="evidence" value="ECO:0000250"/>
    <property type="project" value="UniProtKB"/>
</dbReference>
<dbReference type="GO" id="GO:0005634">
    <property type="term" value="C:nucleus"/>
    <property type="evidence" value="ECO:0007669"/>
    <property type="project" value="UniProtKB-SubCell"/>
</dbReference>
<dbReference type="GO" id="GO:0008017">
    <property type="term" value="F:microtubule binding"/>
    <property type="evidence" value="ECO:0000250"/>
    <property type="project" value="UniProtKB"/>
</dbReference>
<dbReference type="GO" id="GO:0044877">
    <property type="term" value="F:protein-containing complex binding"/>
    <property type="evidence" value="ECO:0007669"/>
    <property type="project" value="TreeGrafter"/>
</dbReference>
<dbReference type="GO" id="GO:0051315">
    <property type="term" value="P:attachment of mitotic spindle microtubules to kinetochore"/>
    <property type="evidence" value="ECO:0007669"/>
    <property type="project" value="TreeGrafter"/>
</dbReference>
<dbReference type="GO" id="GO:0051301">
    <property type="term" value="P:cell division"/>
    <property type="evidence" value="ECO:0007669"/>
    <property type="project" value="UniProtKB-KW"/>
</dbReference>
<dbReference type="GO" id="GO:0051383">
    <property type="term" value="P:kinetochore organization"/>
    <property type="evidence" value="ECO:0007669"/>
    <property type="project" value="TreeGrafter"/>
</dbReference>
<dbReference type="GO" id="GO:0045132">
    <property type="term" value="P:meiotic chromosome segregation"/>
    <property type="evidence" value="ECO:0007669"/>
    <property type="project" value="TreeGrafter"/>
</dbReference>
<dbReference type="GO" id="GO:0007052">
    <property type="term" value="P:mitotic spindle organization"/>
    <property type="evidence" value="ECO:0007669"/>
    <property type="project" value="TreeGrafter"/>
</dbReference>
<dbReference type="Gene3D" id="1.10.418.60">
    <property type="entry name" value="Ncd80 complex, Nuf2 subunit"/>
    <property type="match status" value="1"/>
</dbReference>
<dbReference type="InterPro" id="IPR005549">
    <property type="entry name" value="Kinetochore_Nuf2_N"/>
</dbReference>
<dbReference type="InterPro" id="IPR041112">
    <property type="entry name" value="Nuf2_DHR10-like"/>
</dbReference>
<dbReference type="InterPro" id="IPR038275">
    <property type="entry name" value="Nuf2_N_sf"/>
</dbReference>
<dbReference type="PANTHER" id="PTHR21650:SF2">
    <property type="entry name" value="KINETOCHORE PROTEIN NUF2"/>
    <property type="match status" value="1"/>
</dbReference>
<dbReference type="PANTHER" id="PTHR21650">
    <property type="entry name" value="MEMBRALIN/KINETOCHORE PROTEIN NUF2"/>
    <property type="match status" value="1"/>
</dbReference>
<dbReference type="Pfam" id="PF03800">
    <property type="entry name" value="Nuf2"/>
    <property type="match status" value="1"/>
</dbReference>
<dbReference type="Pfam" id="PF18595">
    <property type="entry name" value="Nuf2_DHR10-like"/>
    <property type="match status" value="1"/>
</dbReference>
<keyword id="KW-0131">Cell cycle</keyword>
<keyword id="KW-0132">Cell division</keyword>
<keyword id="KW-0137">Centromere</keyword>
<keyword id="KW-0158">Chromosome</keyword>
<keyword id="KW-0175">Coiled coil</keyword>
<keyword id="KW-0995">Kinetochore</keyword>
<keyword id="KW-0498">Mitosis</keyword>
<keyword id="KW-0539">Nucleus</keyword>
<keyword id="KW-1185">Reference proteome</keyword>
<proteinExistence type="inferred from homology"/>
<organism>
    <name type="scientific">Debaryomyces hansenii (strain ATCC 36239 / CBS 767 / BCRC 21394 / JCM 1990 / NBRC 0083 / IGC 2968)</name>
    <name type="common">Yeast</name>
    <name type="synonym">Torulaspora hansenii</name>
    <dbReference type="NCBI Taxonomy" id="284592"/>
    <lineage>
        <taxon>Eukaryota</taxon>
        <taxon>Fungi</taxon>
        <taxon>Dikarya</taxon>
        <taxon>Ascomycota</taxon>
        <taxon>Saccharomycotina</taxon>
        <taxon>Pichiomycetes</taxon>
        <taxon>Debaryomycetaceae</taxon>
        <taxon>Debaryomyces</taxon>
    </lineage>
</organism>
<gene>
    <name type="primary">NUF2</name>
    <name type="ordered locus">DEHA2E15092g</name>
</gene>
<reference key="1">
    <citation type="journal article" date="2004" name="Nature">
        <title>Genome evolution in yeasts.</title>
        <authorList>
            <person name="Dujon B."/>
            <person name="Sherman D."/>
            <person name="Fischer G."/>
            <person name="Durrens P."/>
            <person name="Casaregola S."/>
            <person name="Lafontaine I."/>
            <person name="de Montigny J."/>
            <person name="Marck C."/>
            <person name="Neuveglise C."/>
            <person name="Talla E."/>
            <person name="Goffard N."/>
            <person name="Frangeul L."/>
            <person name="Aigle M."/>
            <person name="Anthouard V."/>
            <person name="Babour A."/>
            <person name="Barbe V."/>
            <person name="Barnay S."/>
            <person name="Blanchin S."/>
            <person name="Beckerich J.-M."/>
            <person name="Beyne E."/>
            <person name="Bleykasten C."/>
            <person name="Boisrame A."/>
            <person name="Boyer J."/>
            <person name="Cattolico L."/>
            <person name="Confanioleri F."/>
            <person name="de Daruvar A."/>
            <person name="Despons L."/>
            <person name="Fabre E."/>
            <person name="Fairhead C."/>
            <person name="Ferry-Dumazet H."/>
            <person name="Groppi A."/>
            <person name="Hantraye F."/>
            <person name="Hennequin C."/>
            <person name="Jauniaux N."/>
            <person name="Joyet P."/>
            <person name="Kachouri R."/>
            <person name="Kerrest A."/>
            <person name="Koszul R."/>
            <person name="Lemaire M."/>
            <person name="Lesur I."/>
            <person name="Ma L."/>
            <person name="Muller H."/>
            <person name="Nicaud J.-M."/>
            <person name="Nikolski M."/>
            <person name="Oztas S."/>
            <person name="Ozier-Kalogeropoulos O."/>
            <person name="Pellenz S."/>
            <person name="Potier S."/>
            <person name="Richard G.-F."/>
            <person name="Straub M.-L."/>
            <person name="Suleau A."/>
            <person name="Swennen D."/>
            <person name="Tekaia F."/>
            <person name="Wesolowski-Louvel M."/>
            <person name="Westhof E."/>
            <person name="Wirth B."/>
            <person name="Zeniou-Meyer M."/>
            <person name="Zivanovic Y."/>
            <person name="Bolotin-Fukuhara M."/>
            <person name="Thierry A."/>
            <person name="Bouchier C."/>
            <person name="Caudron B."/>
            <person name="Scarpelli C."/>
            <person name="Gaillardin C."/>
            <person name="Weissenbach J."/>
            <person name="Wincker P."/>
            <person name="Souciet J.-L."/>
        </authorList>
    </citation>
    <scope>NUCLEOTIDE SEQUENCE [LARGE SCALE GENOMIC DNA]</scope>
    <source>
        <strain>ATCC 36239 / CBS 767 / BCRC 21394 / JCM 1990 / NBRC 0083 / IGC 2968</strain>
    </source>
</reference>
<evidence type="ECO:0000250" key="1"/>
<evidence type="ECO:0000255" key="2"/>
<evidence type="ECO:0000256" key="3">
    <source>
        <dbReference type="SAM" id="MobiDB-lite"/>
    </source>
</evidence>
<evidence type="ECO:0000305" key="4"/>
<protein>
    <recommendedName>
        <fullName>Probable kinetochore protein NUF2</fullName>
    </recommendedName>
</protein>
<name>NUF2_DEBHA</name>